<dbReference type="EMBL" id="CU928175">
    <property type="protein sequence ID" value="CAR27098.1"/>
    <property type="molecule type" value="Genomic_DNA"/>
</dbReference>
<dbReference type="RefSeq" id="XP_002496031.1">
    <property type="nucleotide sequence ID" value="XM_002495986.1"/>
</dbReference>
<dbReference type="FunCoup" id="C5DTI7">
    <property type="interactions" value="26"/>
</dbReference>
<dbReference type="STRING" id="559307.C5DTI7"/>
<dbReference type="GeneID" id="8203243"/>
<dbReference type="KEGG" id="zro:ZYRO0C08888g"/>
<dbReference type="HOGENOM" id="CLU_019189_0_1_1"/>
<dbReference type="InParanoid" id="C5DTI7"/>
<dbReference type="Proteomes" id="UP000008536">
    <property type="component" value="Chromosome C"/>
</dbReference>
<dbReference type="GO" id="GO:0005739">
    <property type="term" value="C:mitochondrion"/>
    <property type="evidence" value="ECO:0007669"/>
    <property type="project" value="UniProtKB-SubCell"/>
</dbReference>
<dbReference type="InterPro" id="IPR011009">
    <property type="entry name" value="Kinase-like_dom_sf"/>
</dbReference>
<dbReference type="InterPro" id="IPR051035">
    <property type="entry name" value="Mito_inheritance_9"/>
</dbReference>
<dbReference type="PANTHER" id="PTHR36091">
    <property type="entry name" value="ALTERED INHERITANCE OF MITOCHONDRIA PROTEIN 9, MITOCHONDRIAL"/>
    <property type="match status" value="1"/>
</dbReference>
<dbReference type="PANTHER" id="PTHR36091:SF1">
    <property type="entry name" value="ALTERED INHERITANCE OF MITOCHONDRIA PROTEIN 9, MITOCHONDRIAL"/>
    <property type="match status" value="1"/>
</dbReference>
<dbReference type="SUPFAM" id="SSF56112">
    <property type="entry name" value="Protein kinase-like (PK-like)"/>
    <property type="match status" value="1"/>
</dbReference>
<comment type="subcellular location">
    <subcellularLocation>
        <location evidence="1">Mitochondrion</location>
    </subcellularLocation>
</comment>
<comment type="similarity">
    <text evidence="3">Belongs to the AIM9 family.</text>
</comment>
<protein>
    <recommendedName>
        <fullName>Altered inheritance of mitochondria protein 9, mitochondrial</fullName>
    </recommendedName>
    <alternativeName>
        <fullName>Found in mitochondrial proteome protein 29</fullName>
    </alternativeName>
</protein>
<keyword id="KW-0496">Mitochondrion</keyword>
<keyword id="KW-1185">Reference proteome</keyword>
<keyword id="KW-0809">Transit peptide</keyword>
<reference key="1">
    <citation type="journal article" date="2009" name="Genome Res.">
        <title>Comparative genomics of protoploid Saccharomycetaceae.</title>
        <authorList>
            <consortium name="The Genolevures Consortium"/>
            <person name="Souciet J.-L."/>
            <person name="Dujon B."/>
            <person name="Gaillardin C."/>
            <person name="Johnston M."/>
            <person name="Baret P.V."/>
            <person name="Cliften P."/>
            <person name="Sherman D.J."/>
            <person name="Weissenbach J."/>
            <person name="Westhof E."/>
            <person name="Wincker P."/>
            <person name="Jubin C."/>
            <person name="Poulain J."/>
            <person name="Barbe V."/>
            <person name="Segurens B."/>
            <person name="Artiguenave F."/>
            <person name="Anthouard V."/>
            <person name="Vacherie B."/>
            <person name="Val M.-E."/>
            <person name="Fulton R.S."/>
            <person name="Minx P."/>
            <person name="Wilson R."/>
            <person name="Durrens P."/>
            <person name="Jean G."/>
            <person name="Marck C."/>
            <person name="Martin T."/>
            <person name="Nikolski M."/>
            <person name="Rolland T."/>
            <person name="Seret M.-L."/>
            <person name="Casaregola S."/>
            <person name="Despons L."/>
            <person name="Fairhead C."/>
            <person name="Fischer G."/>
            <person name="Lafontaine I."/>
            <person name="Leh V."/>
            <person name="Lemaire M."/>
            <person name="de Montigny J."/>
            <person name="Neuveglise C."/>
            <person name="Thierry A."/>
            <person name="Blanc-Lenfle I."/>
            <person name="Bleykasten C."/>
            <person name="Diffels J."/>
            <person name="Fritsch E."/>
            <person name="Frangeul L."/>
            <person name="Goeffon A."/>
            <person name="Jauniaux N."/>
            <person name="Kachouri-Lafond R."/>
            <person name="Payen C."/>
            <person name="Potier S."/>
            <person name="Pribylova L."/>
            <person name="Ozanne C."/>
            <person name="Richard G.-F."/>
            <person name="Sacerdot C."/>
            <person name="Straub M.-L."/>
            <person name="Talla E."/>
        </authorList>
    </citation>
    <scope>NUCLEOTIDE SEQUENCE [LARGE SCALE GENOMIC DNA]</scope>
    <source>
        <strain>ATCC 2623 / CBS 732 / BCRC 21506 / NBRC 1130 / NCYC 568 / NRRL Y-229</strain>
    </source>
</reference>
<name>AIM9_ZYGRC</name>
<gene>
    <name type="primary">AIM9</name>
    <name type="synonym">FMP29</name>
    <name type="ordered locus">ZYRO0C08888g</name>
</gene>
<sequence>MIRSTTAKLGKRCATLRVRASPILRPLVATRCITNKADEVFTKLSDENDPKRDAFFNYSWGSWLVNDKQEKAKRVTKFSLEGLTDVLNEIYADSQQLAKTVKSNRIPAPNHKKNLIVTLPHNTMIKDLGTVNPNEKVRVIRMASIHEGKHHRIYKLDTNIDRSFVLRIPYALENGHVIESRLKSEVATMDFAHLKLGINVPKVYCYGVNALNPVRQPFVLEEFIEGKLLMRDWNPLVDDKKDSLPDDNLKSVVEQVSDLQSKLLSMQFNGIGSLYFSKDYERPGEPKKSVYDGESNPDLQGRWIIGPTAERVFWRKKSVLNKEALSKFLGPWSANEPLEVVKNTGLVEAENAKARLALKQADASPEAVDETTLSEQIVSFENLATVGPHLFDSGTTTIPNVKELLKPRLYHPDLDPMNIIVTAEGTPYLLDFEGSSVKPFILHNSPQFVAYDGPKIFDLQEDIPDYEKLVDSEKAQYEFMYKRTRNQFLWDSALNERNNKLISAVAPPVKLLRSPYIAAVERKSDDEYLLIDEALIQLAEVWEVFYKNGLVKDANYPLTFSKETLEKHANDLNAFHEKLISRPFAATQGWIPQDMFENLIKAGILVKESDSSYTVKTENLD</sequence>
<organism>
    <name type="scientific">Zygosaccharomyces rouxii (strain ATCC 2623 / CBS 732 / NBRC 1130 / NCYC 568 / NRRL Y-229)</name>
    <dbReference type="NCBI Taxonomy" id="559307"/>
    <lineage>
        <taxon>Eukaryota</taxon>
        <taxon>Fungi</taxon>
        <taxon>Dikarya</taxon>
        <taxon>Ascomycota</taxon>
        <taxon>Saccharomycotina</taxon>
        <taxon>Saccharomycetes</taxon>
        <taxon>Saccharomycetales</taxon>
        <taxon>Saccharomycetaceae</taxon>
        <taxon>Zygosaccharomyces</taxon>
    </lineage>
</organism>
<accession>C5DTI7</accession>
<feature type="transit peptide" description="Mitochondrion" evidence="2">
    <location>
        <begin position="1"/>
        <end position="40"/>
    </location>
</feature>
<feature type="chain" id="PRO_0000408735" description="Altered inheritance of mitochondria protein 9, mitochondrial">
    <location>
        <begin position="41"/>
        <end position="621"/>
    </location>
</feature>
<proteinExistence type="inferred from homology"/>
<evidence type="ECO:0000250" key="1"/>
<evidence type="ECO:0000255" key="2"/>
<evidence type="ECO:0000305" key="3"/>